<comment type="function">
    <text evidence="1">Component of the eukaryotic translation initiation factor 3 (eIF-3) complex, which is involved in protein synthesis of a specialized repertoire of mRNAs and, together with other initiation factors, stimulates binding of mRNA and methionyl-tRNAi to the 40S ribosome. The eIF-3 complex specifically targets and initiates translation of a subset of mRNAs involved in cell proliferation.</text>
</comment>
<comment type="subunit">
    <text evidence="1">Component of the eukaryotic translation initiation factor 3 (eIF-3) complex.</text>
</comment>
<comment type="subcellular location">
    <subcellularLocation>
        <location evidence="1">Cytoplasm</location>
    </subcellularLocation>
</comment>
<comment type="similarity">
    <text evidence="1">Belongs to the eIF-3 subunit J family.</text>
</comment>
<reference key="1">
    <citation type="journal article" date="2003" name="Nature">
        <title>The genome sequence of the filamentous fungus Neurospora crassa.</title>
        <authorList>
            <person name="Galagan J.E."/>
            <person name="Calvo S.E."/>
            <person name="Borkovich K.A."/>
            <person name="Selker E.U."/>
            <person name="Read N.D."/>
            <person name="Jaffe D.B."/>
            <person name="FitzHugh W."/>
            <person name="Ma L.-J."/>
            <person name="Smirnov S."/>
            <person name="Purcell S."/>
            <person name="Rehman B."/>
            <person name="Elkins T."/>
            <person name="Engels R."/>
            <person name="Wang S."/>
            <person name="Nielsen C.B."/>
            <person name="Butler J."/>
            <person name="Endrizzi M."/>
            <person name="Qui D."/>
            <person name="Ianakiev P."/>
            <person name="Bell-Pedersen D."/>
            <person name="Nelson M.A."/>
            <person name="Werner-Washburne M."/>
            <person name="Selitrennikoff C.P."/>
            <person name="Kinsey J.A."/>
            <person name="Braun E.L."/>
            <person name="Zelter A."/>
            <person name="Schulte U."/>
            <person name="Kothe G.O."/>
            <person name="Jedd G."/>
            <person name="Mewes H.-W."/>
            <person name="Staben C."/>
            <person name="Marcotte E."/>
            <person name="Greenberg D."/>
            <person name="Roy A."/>
            <person name="Foley K."/>
            <person name="Naylor J."/>
            <person name="Stange-Thomann N."/>
            <person name="Barrett R."/>
            <person name="Gnerre S."/>
            <person name="Kamal M."/>
            <person name="Kamvysselis M."/>
            <person name="Mauceli E.W."/>
            <person name="Bielke C."/>
            <person name="Rudd S."/>
            <person name="Frishman D."/>
            <person name="Krystofova S."/>
            <person name="Rasmussen C."/>
            <person name="Metzenberg R.L."/>
            <person name="Perkins D.D."/>
            <person name="Kroken S."/>
            <person name="Cogoni C."/>
            <person name="Macino G."/>
            <person name="Catcheside D.E.A."/>
            <person name="Li W."/>
            <person name="Pratt R.J."/>
            <person name="Osmani S.A."/>
            <person name="DeSouza C.P.C."/>
            <person name="Glass N.L."/>
            <person name="Orbach M.J."/>
            <person name="Berglund J.A."/>
            <person name="Voelker R."/>
            <person name="Yarden O."/>
            <person name="Plamann M."/>
            <person name="Seiler S."/>
            <person name="Dunlap J.C."/>
            <person name="Radford A."/>
            <person name="Aramayo R."/>
            <person name="Natvig D.O."/>
            <person name="Alex L.A."/>
            <person name="Mannhaupt G."/>
            <person name="Ebbole D.J."/>
            <person name="Freitag M."/>
            <person name="Paulsen I."/>
            <person name="Sachs M.S."/>
            <person name="Lander E.S."/>
            <person name="Nusbaum C."/>
            <person name="Birren B.W."/>
        </authorList>
    </citation>
    <scope>NUCLEOTIDE SEQUENCE [LARGE SCALE GENOMIC DNA]</scope>
    <source>
        <strain>ATCC 24698 / 74-OR23-1A / CBS 708.71 / DSM 1257 / FGSC 987</strain>
    </source>
</reference>
<accession>Q7S931</accession>
<keyword id="KW-0175">Coiled coil</keyword>
<keyword id="KW-0963">Cytoplasm</keyword>
<keyword id="KW-0396">Initiation factor</keyword>
<keyword id="KW-0648">Protein biosynthesis</keyword>
<keyword id="KW-1185">Reference proteome</keyword>
<sequence length="274" mass="30255">MSGKKWDEEEEESSAPNSPVLAPGRRRFDDEEGNESDVLDSWDAAEDSEVEREKAKKAAEAKAKAEAEAAANKKSKAQRIAERQAERARQLAEDSDAEEETEAERRERLRREQKESDLKHAEDLFAGIGISNDRKVVSKGTIVQIDPKDPNNTIDISTLALFNPTTKTQFETLRTTLGPMIGKLSPKPHYTLFLQEFSKQLAKDLKSDEIKKIASTLTALSNEKLKEEKAAEKGGKKSKAAKTKTSLAGVGRGGAIAEAHDTYDDDAFGDDDFM</sequence>
<feature type="chain" id="PRO_0000365158" description="Eukaryotic translation initiation factor 3 subunit J">
    <location>
        <begin position="1"/>
        <end position="274"/>
    </location>
</feature>
<feature type="region of interest" description="Disordered" evidence="2">
    <location>
        <begin position="1"/>
        <end position="120"/>
    </location>
</feature>
<feature type="region of interest" description="Disordered" evidence="2">
    <location>
        <begin position="227"/>
        <end position="246"/>
    </location>
</feature>
<feature type="coiled-coil region" evidence="1">
    <location>
        <begin position="46"/>
        <end position="112"/>
    </location>
</feature>
<feature type="compositionally biased region" description="Acidic residues" evidence="2">
    <location>
        <begin position="30"/>
        <end position="50"/>
    </location>
</feature>
<feature type="compositionally biased region" description="Basic and acidic residues" evidence="2">
    <location>
        <begin position="51"/>
        <end position="67"/>
    </location>
</feature>
<feature type="compositionally biased region" description="Basic and acidic residues" evidence="2">
    <location>
        <begin position="79"/>
        <end position="92"/>
    </location>
</feature>
<feature type="compositionally biased region" description="Acidic residues" evidence="2">
    <location>
        <begin position="93"/>
        <end position="102"/>
    </location>
</feature>
<feature type="compositionally biased region" description="Basic and acidic residues" evidence="2">
    <location>
        <begin position="103"/>
        <end position="120"/>
    </location>
</feature>
<dbReference type="EMBL" id="CM002239">
    <property type="protein sequence ID" value="EAA32851.1"/>
    <property type="molecule type" value="Genomic_DNA"/>
</dbReference>
<dbReference type="RefSeq" id="XP_962087.1">
    <property type="nucleotide sequence ID" value="XM_956994.2"/>
</dbReference>
<dbReference type="SMR" id="Q7S931"/>
<dbReference type="FunCoup" id="Q7S931">
    <property type="interactions" value="97"/>
</dbReference>
<dbReference type="STRING" id="367110.Q7S931"/>
<dbReference type="PaxDb" id="5141-EFNCRP00000008182"/>
<dbReference type="EnsemblFungi" id="EAA32851">
    <property type="protein sequence ID" value="EAA32851"/>
    <property type="gene ID" value="NCU07954"/>
</dbReference>
<dbReference type="GeneID" id="3878252"/>
<dbReference type="KEGG" id="ncr:NCU07954"/>
<dbReference type="VEuPathDB" id="FungiDB:NCU07954"/>
<dbReference type="HOGENOM" id="CLU_087988_0_0_1"/>
<dbReference type="InParanoid" id="Q7S931"/>
<dbReference type="OMA" id="KPHYALW"/>
<dbReference type="Proteomes" id="UP000001805">
    <property type="component" value="Chromosome 4, Linkage Group IV"/>
</dbReference>
<dbReference type="GO" id="GO:0016282">
    <property type="term" value="C:eukaryotic 43S preinitiation complex"/>
    <property type="evidence" value="ECO:0007669"/>
    <property type="project" value="UniProtKB-UniRule"/>
</dbReference>
<dbReference type="GO" id="GO:0033290">
    <property type="term" value="C:eukaryotic 48S preinitiation complex"/>
    <property type="evidence" value="ECO:0007669"/>
    <property type="project" value="UniProtKB-UniRule"/>
</dbReference>
<dbReference type="GO" id="GO:0005852">
    <property type="term" value="C:eukaryotic translation initiation factor 3 complex"/>
    <property type="evidence" value="ECO:0000318"/>
    <property type="project" value="GO_Central"/>
</dbReference>
<dbReference type="GO" id="GO:0003743">
    <property type="term" value="F:translation initiation factor activity"/>
    <property type="evidence" value="ECO:0007669"/>
    <property type="project" value="UniProtKB-UniRule"/>
</dbReference>
<dbReference type="GO" id="GO:0001732">
    <property type="term" value="P:formation of cytoplasmic translation initiation complex"/>
    <property type="evidence" value="ECO:0007669"/>
    <property type="project" value="UniProtKB-UniRule"/>
</dbReference>
<dbReference type="FunFam" id="1.10.246.60:FF:000003">
    <property type="entry name" value="Eukaryotic translation initiation factor 3 subunit J"/>
    <property type="match status" value="1"/>
</dbReference>
<dbReference type="Gene3D" id="1.10.246.60">
    <property type="entry name" value="Eukaryotic translation initiation factor 3 like domains"/>
    <property type="match status" value="1"/>
</dbReference>
<dbReference type="HAMAP" id="MF_03009">
    <property type="entry name" value="eIF3j"/>
    <property type="match status" value="1"/>
</dbReference>
<dbReference type="InterPro" id="IPR023194">
    <property type="entry name" value="eIF3-like_dom_sf"/>
</dbReference>
<dbReference type="InterPro" id="IPR013906">
    <property type="entry name" value="eIF3j"/>
</dbReference>
<dbReference type="PANTHER" id="PTHR21681">
    <property type="entry name" value="EUKARYOTIC TRANSLATION INITIATION FACTOR 3 SUBUNIT J"/>
    <property type="match status" value="1"/>
</dbReference>
<dbReference type="PANTHER" id="PTHR21681:SF0">
    <property type="entry name" value="EUKARYOTIC TRANSLATION INITIATION FACTOR 3 SUBUNIT J"/>
    <property type="match status" value="1"/>
</dbReference>
<dbReference type="Pfam" id="PF08597">
    <property type="entry name" value="eIF3_subunit"/>
    <property type="match status" value="1"/>
</dbReference>
<protein>
    <recommendedName>
        <fullName evidence="1">Eukaryotic translation initiation factor 3 subunit J</fullName>
        <shortName evidence="1">eIF3j</shortName>
    </recommendedName>
    <alternativeName>
        <fullName>Eukaryotic translation initiation factor 3 30 kDa subunit</fullName>
        <shortName>eIF-3 30 kDa</shortName>
    </alternativeName>
</protein>
<name>EIF3J_NEUCR</name>
<gene>
    <name type="primary">hcr-1</name>
    <name type="ORF">NCU07954</name>
</gene>
<proteinExistence type="inferred from homology"/>
<organism>
    <name type="scientific">Neurospora crassa (strain ATCC 24698 / 74-OR23-1A / CBS 708.71 / DSM 1257 / FGSC 987)</name>
    <dbReference type="NCBI Taxonomy" id="367110"/>
    <lineage>
        <taxon>Eukaryota</taxon>
        <taxon>Fungi</taxon>
        <taxon>Dikarya</taxon>
        <taxon>Ascomycota</taxon>
        <taxon>Pezizomycotina</taxon>
        <taxon>Sordariomycetes</taxon>
        <taxon>Sordariomycetidae</taxon>
        <taxon>Sordariales</taxon>
        <taxon>Sordariaceae</taxon>
        <taxon>Neurospora</taxon>
    </lineage>
</organism>
<evidence type="ECO:0000255" key="1">
    <source>
        <dbReference type="HAMAP-Rule" id="MF_03009"/>
    </source>
</evidence>
<evidence type="ECO:0000256" key="2">
    <source>
        <dbReference type="SAM" id="MobiDB-lite"/>
    </source>
</evidence>